<keyword id="KW-0240">DNA-directed RNA polymerase</keyword>
<keyword id="KW-0548">Nucleotidyltransferase</keyword>
<keyword id="KW-0804">Transcription</keyword>
<keyword id="KW-0808">Transferase</keyword>
<dbReference type="EC" id="2.7.7.6" evidence="1"/>
<dbReference type="EMBL" id="AM286415">
    <property type="protein sequence ID" value="CAL10190.1"/>
    <property type="molecule type" value="Genomic_DNA"/>
</dbReference>
<dbReference type="RefSeq" id="WP_004392061.1">
    <property type="nucleotide sequence ID" value="NC_008800.1"/>
</dbReference>
<dbReference type="RefSeq" id="YP_001004442.1">
    <property type="nucleotide sequence ID" value="NC_008800.1"/>
</dbReference>
<dbReference type="SMR" id="A1JHV7"/>
<dbReference type="GeneID" id="97458311"/>
<dbReference type="KEGG" id="yen:YE0046"/>
<dbReference type="PATRIC" id="fig|393305.7.peg.136"/>
<dbReference type="eggNOG" id="COG1758">
    <property type="taxonomic scope" value="Bacteria"/>
</dbReference>
<dbReference type="HOGENOM" id="CLU_125406_5_3_6"/>
<dbReference type="OrthoDB" id="9796300at2"/>
<dbReference type="PRO" id="PR:A1JHV7"/>
<dbReference type="Proteomes" id="UP000000642">
    <property type="component" value="Chromosome"/>
</dbReference>
<dbReference type="GO" id="GO:0000428">
    <property type="term" value="C:DNA-directed RNA polymerase complex"/>
    <property type="evidence" value="ECO:0007669"/>
    <property type="project" value="UniProtKB-KW"/>
</dbReference>
<dbReference type="GO" id="GO:0003677">
    <property type="term" value="F:DNA binding"/>
    <property type="evidence" value="ECO:0007669"/>
    <property type="project" value="UniProtKB-UniRule"/>
</dbReference>
<dbReference type="GO" id="GO:0003899">
    <property type="term" value="F:DNA-directed RNA polymerase activity"/>
    <property type="evidence" value="ECO:0007669"/>
    <property type="project" value="UniProtKB-UniRule"/>
</dbReference>
<dbReference type="GO" id="GO:0006351">
    <property type="term" value="P:DNA-templated transcription"/>
    <property type="evidence" value="ECO:0007669"/>
    <property type="project" value="UniProtKB-UniRule"/>
</dbReference>
<dbReference type="FunFam" id="3.90.940.10:FF:000001">
    <property type="entry name" value="DNA-directed RNA polymerase subunit omega"/>
    <property type="match status" value="1"/>
</dbReference>
<dbReference type="Gene3D" id="3.90.940.10">
    <property type="match status" value="1"/>
</dbReference>
<dbReference type="HAMAP" id="MF_00366">
    <property type="entry name" value="RNApol_bact_RpoZ"/>
    <property type="match status" value="1"/>
</dbReference>
<dbReference type="InterPro" id="IPR003716">
    <property type="entry name" value="DNA-dir_RNA_pol_omega"/>
</dbReference>
<dbReference type="InterPro" id="IPR006110">
    <property type="entry name" value="Pol_omega/Rpo6/RPB6"/>
</dbReference>
<dbReference type="InterPro" id="IPR036161">
    <property type="entry name" value="RPB6/omega-like_sf"/>
</dbReference>
<dbReference type="NCBIfam" id="TIGR00690">
    <property type="entry name" value="rpoZ"/>
    <property type="match status" value="1"/>
</dbReference>
<dbReference type="PANTHER" id="PTHR34476">
    <property type="entry name" value="DNA-DIRECTED RNA POLYMERASE SUBUNIT OMEGA"/>
    <property type="match status" value="1"/>
</dbReference>
<dbReference type="PANTHER" id="PTHR34476:SF1">
    <property type="entry name" value="DNA-DIRECTED RNA POLYMERASE SUBUNIT OMEGA"/>
    <property type="match status" value="1"/>
</dbReference>
<dbReference type="Pfam" id="PF01192">
    <property type="entry name" value="RNA_pol_Rpb6"/>
    <property type="match status" value="1"/>
</dbReference>
<dbReference type="SMART" id="SM01409">
    <property type="entry name" value="RNA_pol_Rpb6"/>
    <property type="match status" value="1"/>
</dbReference>
<dbReference type="SUPFAM" id="SSF63562">
    <property type="entry name" value="RPB6/omega subunit-like"/>
    <property type="match status" value="1"/>
</dbReference>
<evidence type="ECO:0000255" key="1">
    <source>
        <dbReference type="HAMAP-Rule" id="MF_00366"/>
    </source>
</evidence>
<protein>
    <recommendedName>
        <fullName evidence="1">DNA-directed RNA polymerase subunit omega</fullName>
        <shortName evidence="1">RNAP omega subunit</shortName>
        <ecNumber evidence="1">2.7.7.6</ecNumber>
    </recommendedName>
    <alternativeName>
        <fullName evidence="1">RNA polymerase omega subunit</fullName>
    </alternativeName>
    <alternativeName>
        <fullName evidence="1">Transcriptase subunit omega</fullName>
    </alternativeName>
</protein>
<feature type="chain" id="PRO_1000006038" description="DNA-directed RNA polymerase subunit omega">
    <location>
        <begin position="1"/>
        <end position="91"/>
    </location>
</feature>
<organism>
    <name type="scientific">Yersinia enterocolitica serotype O:8 / biotype 1B (strain NCTC 13174 / 8081)</name>
    <dbReference type="NCBI Taxonomy" id="393305"/>
    <lineage>
        <taxon>Bacteria</taxon>
        <taxon>Pseudomonadati</taxon>
        <taxon>Pseudomonadota</taxon>
        <taxon>Gammaproteobacteria</taxon>
        <taxon>Enterobacterales</taxon>
        <taxon>Yersiniaceae</taxon>
        <taxon>Yersinia</taxon>
    </lineage>
</organism>
<gene>
    <name evidence="1" type="primary">rpoZ</name>
    <name type="ordered locus">YE0046</name>
</gene>
<reference key="1">
    <citation type="journal article" date="2006" name="PLoS Genet.">
        <title>The complete genome sequence and comparative genome analysis of the high pathogenicity Yersinia enterocolitica strain 8081.</title>
        <authorList>
            <person name="Thomson N.R."/>
            <person name="Howard S."/>
            <person name="Wren B.W."/>
            <person name="Holden M.T.G."/>
            <person name="Crossman L."/>
            <person name="Challis G.L."/>
            <person name="Churcher C."/>
            <person name="Mungall K."/>
            <person name="Brooks K."/>
            <person name="Chillingworth T."/>
            <person name="Feltwell T."/>
            <person name="Abdellah Z."/>
            <person name="Hauser H."/>
            <person name="Jagels K."/>
            <person name="Maddison M."/>
            <person name="Moule S."/>
            <person name="Sanders M."/>
            <person name="Whitehead S."/>
            <person name="Quail M.A."/>
            <person name="Dougan G."/>
            <person name="Parkhill J."/>
            <person name="Prentice M.B."/>
        </authorList>
    </citation>
    <scope>NUCLEOTIDE SEQUENCE [LARGE SCALE GENOMIC DNA]</scope>
    <source>
        <strain>NCTC 13174 / 8081</strain>
    </source>
</reference>
<name>RPOZ_YERE8</name>
<accession>A1JHV7</accession>
<sequence>MARVTVQDAVEKIGNRFDLVLVAARRARQIQSGGKDALVPEENDKVTVIALREIEEGLITNQILDVRERQEQQEQEAAEIQAVTAIAEGRR</sequence>
<proteinExistence type="inferred from homology"/>
<comment type="function">
    <text evidence="1">Promotes RNA polymerase assembly. Latches the N- and C-terminal regions of the beta' subunit thereby facilitating its interaction with the beta and alpha subunits.</text>
</comment>
<comment type="catalytic activity">
    <reaction evidence="1">
        <text>RNA(n) + a ribonucleoside 5'-triphosphate = RNA(n+1) + diphosphate</text>
        <dbReference type="Rhea" id="RHEA:21248"/>
        <dbReference type="Rhea" id="RHEA-COMP:14527"/>
        <dbReference type="Rhea" id="RHEA-COMP:17342"/>
        <dbReference type="ChEBI" id="CHEBI:33019"/>
        <dbReference type="ChEBI" id="CHEBI:61557"/>
        <dbReference type="ChEBI" id="CHEBI:140395"/>
        <dbReference type="EC" id="2.7.7.6"/>
    </reaction>
</comment>
<comment type="subunit">
    <text evidence="1">The RNAP catalytic core consists of 2 alpha, 1 beta, 1 beta' and 1 omega subunit. When a sigma factor is associated with the core the holoenzyme is formed, which can initiate transcription.</text>
</comment>
<comment type="similarity">
    <text evidence="1">Belongs to the RNA polymerase subunit omega family.</text>
</comment>